<reference key="1">
    <citation type="submission" date="2002-01" db="EMBL/GenBank/DDBJ databases">
        <title>The nucleotide sequence of a long cDNA clone isolated from human spleen.</title>
        <authorList>
            <person name="Jikuya H."/>
            <person name="Takano J."/>
            <person name="Nomura N."/>
            <person name="Kikuno R."/>
            <person name="Nagase T."/>
            <person name="Ohara O."/>
        </authorList>
    </citation>
    <scope>NUCLEOTIDE SEQUENCE [LARGE SCALE MRNA]</scope>
    <source>
        <tissue>Spleen</tissue>
    </source>
</reference>
<reference key="2">
    <citation type="journal article" date="2004" name="Nature">
        <title>The DNA sequence and comparative analysis of human chromosome 10.</title>
        <authorList>
            <person name="Deloukas P."/>
            <person name="Earthrowl M.E."/>
            <person name="Grafham D.V."/>
            <person name="Rubenfield M."/>
            <person name="French L."/>
            <person name="Steward C.A."/>
            <person name="Sims S.K."/>
            <person name="Jones M.C."/>
            <person name="Searle S."/>
            <person name="Scott C."/>
            <person name="Howe K."/>
            <person name="Hunt S.E."/>
            <person name="Andrews T.D."/>
            <person name="Gilbert J.G.R."/>
            <person name="Swarbreck D."/>
            <person name="Ashurst J.L."/>
            <person name="Taylor A."/>
            <person name="Battles J."/>
            <person name="Bird C.P."/>
            <person name="Ainscough R."/>
            <person name="Almeida J.P."/>
            <person name="Ashwell R.I.S."/>
            <person name="Ambrose K.D."/>
            <person name="Babbage A.K."/>
            <person name="Bagguley C.L."/>
            <person name="Bailey J."/>
            <person name="Banerjee R."/>
            <person name="Bates K."/>
            <person name="Beasley H."/>
            <person name="Bray-Allen S."/>
            <person name="Brown A.J."/>
            <person name="Brown J.Y."/>
            <person name="Burford D.C."/>
            <person name="Burrill W."/>
            <person name="Burton J."/>
            <person name="Cahill P."/>
            <person name="Camire D."/>
            <person name="Carter N.P."/>
            <person name="Chapman J.C."/>
            <person name="Clark S.Y."/>
            <person name="Clarke G."/>
            <person name="Clee C.M."/>
            <person name="Clegg S."/>
            <person name="Corby N."/>
            <person name="Coulson A."/>
            <person name="Dhami P."/>
            <person name="Dutta I."/>
            <person name="Dunn M."/>
            <person name="Faulkner L."/>
            <person name="Frankish A."/>
            <person name="Frankland J.A."/>
            <person name="Garner P."/>
            <person name="Garnett J."/>
            <person name="Gribble S."/>
            <person name="Griffiths C."/>
            <person name="Grocock R."/>
            <person name="Gustafson E."/>
            <person name="Hammond S."/>
            <person name="Harley J.L."/>
            <person name="Hart E."/>
            <person name="Heath P.D."/>
            <person name="Ho T.P."/>
            <person name="Hopkins B."/>
            <person name="Horne J."/>
            <person name="Howden P.J."/>
            <person name="Huckle E."/>
            <person name="Hynds C."/>
            <person name="Johnson C."/>
            <person name="Johnson D."/>
            <person name="Kana A."/>
            <person name="Kay M."/>
            <person name="Kimberley A.M."/>
            <person name="Kershaw J.K."/>
            <person name="Kokkinaki M."/>
            <person name="Laird G.K."/>
            <person name="Lawlor S."/>
            <person name="Lee H.M."/>
            <person name="Leongamornlert D.A."/>
            <person name="Laird G."/>
            <person name="Lloyd C."/>
            <person name="Lloyd D.M."/>
            <person name="Loveland J."/>
            <person name="Lovell J."/>
            <person name="McLaren S."/>
            <person name="McLay K.E."/>
            <person name="McMurray A."/>
            <person name="Mashreghi-Mohammadi M."/>
            <person name="Matthews L."/>
            <person name="Milne S."/>
            <person name="Nickerson T."/>
            <person name="Nguyen M."/>
            <person name="Overton-Larty E."/>
            <person name="Palmer S.A."/>
            <person name="Pearce A.V."/>
            <person name="Peck A.I."/>
            <person name="Pelan S."/>
            <person name="Phillimore B."/>
            <person name="Porter K."/>
            <person name="Rice C.M."/>
            <person name="Rogosin A."/>
            <person name="Ross M.T."/>
            <person name="Sarafidou T."/>
            <person name="Sehra H.K."/>
            <person name="Shownkeen R."/>
            <person name="Skuce C.D."/>
            <person name="Smith M."/>
            <person name="Standring L."/>
            <person name="Sycamore N."/>
            <person name="Tester J."/>
            <person name="Thorpe A."/>
            <person name="Torcasso W."/>
            <person name="Tracey A."/>
            <person name="Tromans A."/>
            <person name="Tsolas J."/>
            <person name="Wall M."/>
            <person name="Walsh J."/>
            <person name="Wang H."/>
            <person name="Weinstock K."/>
            <person name="West A.P."/>
            <person name="Willey D.L."/>
            <person name="Whitehead S.L."/>
            <person name="Wilming L."/>
            <person name="Wray P.W."/>
            <person name="Young L."/>
            <person name="Chen Y."/>
            <person name="Lovering R.C."/>
            <person name="Moschonas N.K."/>
            <person name="Siebert R."/>
            <person name="Fechtel K."/>
            <person name="Bentley D."/>
            <person name="Durbin R.M."/>
            <person name="Hubbard T."/>
            <person name="Doucette-Stamm L."/>
            <person name="Beck S."/>
            <person name="Smith D.R."/>
            <person name="Rogers J."/>
        </authorList>
    </citation>
    <scope>NUCLEOTIDE SEQUENCE [LARGE SCALE GENOMIC DNA]</scope>
</reference>
<reference key="3">
    <citation type="journal article" date="2004" name="Genome Res.">
        <title>The status, quality, and expansion of the NIH full-length cDNA project: the Mammalian Gene Collection (MGC).</title>
        <authorList>
            <consortium name="The MGC Project Team"/>
        </authorList>
    </citation>
    <scope>NUCLEOTIDE SEQUENCE [LARGE SCALE MRNA]</scope>
</reference>
<proteinExistence type="evidence at protein level"/>
<accession>Q8TEF2</accession>
<organism>
    <name type="scientific">Homo sapiens</name>
    <name type="common">Human</name>
    <dbReference type="NCBI Taxonomy" id="9606"/>
    <lineage>
        <taxon>Eukaryota</taxon>
        <taxon>Metazoa</taxon>
        <taxon>Chordata</taxon>
        <taxon>Craniata</taxon>
        <taxon>Vertebrata</taxon>
        <taxon>Euteleostomi</taxon>
        <taxon>Mammalia</taxon>
        <taxon>Eutheria</taxon>
        <taxon>Euarchontoglires</taxon>
        <taxon>Primates</taxon>
        <taxon>Haplorrhini</taxon>
        <taxon>Catarrhini</taxon>
        <taxon>Hominidae</taxon>
        <taxon>Homo</taxon>
    </lineage>
</organism>
<name>CJ105_HUMAN</name>
<evidence type="ECO:0000255" key="1"/>
<evidence type="ECO:0000256" key="2">
    <source>
        <dbReference type="SAM" id="MobiDB-lite"/>
    </source>
</evidence>
<evidence type="ECO:0000305" key="3"/>
<comment type="subcellular location">
    <subcellularLocation>
        <location evidence="3">Membrane</location>
        <topology evidence="3">Single-pass membrane protein</topology>
    </subcellularLocation>
</comment>
<keyword id="KW-0472">Membrane</keyword>
<keyword id="KW-1267">Proteomics identification</keyword>
<keyword id="KW-1185">Reference proteome</keyword>
<keyword id="KW-0812">Transmembrane</keyword>
<keyword id="KW-1133">Transmembrane helix</keyword>
<protein>
    <recommendedName>
        <fullName>Uncharacterized protein C10orf105</fullName>
    </recommendedName>
</protein>
<gene>
    <name type="primary">C10orf105</name>
</gene>
<feature type="chain" id="PRO_0000331530" description="Uncharacterized protein C10orf105">
    <location>
        <begin position="1"/>
        <end position="133"/>
    </location>
</feature>
<feature type="transmembrane region" description="Helical" evidence="1">
    <location>
        <begin position="36"/>
        <end position="56"/>
    </location>
</feature>
<feature type="region of interest" description="Disordered" evidence="2">
    <location>
        <begin position="105"/>
        <end position="133"/>
    </location>
</feature>
<feature type="compositionally biased region" description="Basic and acidic residues" evidence="2">
    <location>
        <begin position="119"/>
        <end position="133"/>
    </location>
</feature>
<feature type="sequence conflict" description="In Ref. 1; BAB84998." evidence="3" ref="1">
    <original>L</original>
    <variation>V</variation>
    <location>
        <position position="54"/>
    </location>
</feature>
<dbReference type="EMBL" id="AK074172">
    <property type="protein sequence ID" value="BAB84998.1"/>
    <property type="molecule type" value="mRNA"/>
</dbReference>
<dbReference type="EMBL" id="AL731541">
    <property type="status" value="NOT_ANNOTATED_CDS"/>
    <property type="molecule type" value="Genomic_DNA"/>
</dbReference>
<dbReference type="EMBL" id="BC071608">
    <property type="status" value="NOT_ANNOTATED_CDS"/>
    <property type="molecule type" value="mRNA"/>
</dbReference>
<dbReference type="CCDS" id="CCDS44430.1"/>
<dbReference type="RefSeq" id="NP_001157847.1">
    <property type="nucleotide sequence ID" value="NM_001164375.3"/>
</dbReference>
<dbReference type="RefSeq" id="NP_001161862.1">
    <property type="nucleotide sequence ID" value="NM_001168390.2"/>
</dbReference>
<dbReference type="RefSeq" id="XP_011538110.1">
    <property type="nucleotide sequence ID" value="XM_011539808.2"/>
</dbReference>
<dbReference type="RefSeq" id="XP_011538111.1">
    <property type="nucleotide sequence ID" value="XM_011539809.2"/>
</dbReference>
<dbReference type="SMR" id="Q8TEF2"/>
<dbReference type="BioGRID" id="135942">
    <property type="interactions" value="1"/>
</dbReference>
<dbReference type="STRING" id="9606.ENSP00000403151"/>
<dbReference type="GlyGen" id="Q8TEF2">
    <property type="glycosylation" value="1 site"/>
</dbReference>
<dbReference type="iPTMnet" id="Q8TEF2"/>
<dbReference type="PhosphoSitePlus" id="Q8TEF2"/>
<dbReference type="BioMuta" id="C10orf105"/>
<dbReference type="PaxDb" id="9606-ENSP00000403151"/>
<dbReference type="PeptideAtlas" id="Q8TEF2"/>
<dbReference type="DNASU" id="414152"/>
<dbReference type="Ensembl" id="ENST00000398786.2">
    <property type="protein sequence ID" value="ENSP00000381766.3"/>
    <property type="gene ID" value="ENSG00000214688.6"/>
</dbReference>
<dbReference type="Ensembl" id="ENST00000441508.4">
    <property type="protein sequence ID" value="ENSP00000403151.2"/>
    <property type="gene ID" value="ENSG00000214688.6"/>
</dbReference>
<dbReference type="GeneID" id="414152"/>
<dbReference type="KEGG" id="hsa:414152"/>
<dbReference type="MANE-Select" id="ENST00000441508.4">
    <property type="protein sequence ID" value="ENSP00000403151.2"/>
    <property type="RefSeq nucleotide sequence ID" value="NM_001164375.3"/>
    <property type="RefSeq protein sequence ID" value="NP_001157847.1"/>
</dbReference>
<dbReference type="UCSC" id="uc001jsa.2">
    <property type="organism name" value="human"/>
</dbReference>
<dbReference type="AGR" id="HGNC:20304"/>
<dbReference type="CTD" id="414152"/>
<dbReference type="DisGeNET" id="414152"/>
<dbReference type="GeneCards" id="C10orf105"/>
<dbReference type="HGNC" id="HGNC:20304">
    <property type="gene designation" value="C10orf105"/>
</dbReference>
<dbReference type="HPA" id="ENSG00000214688">
    <property type="expression patterns" value="Tissue enriched (brain)"/>
</dbReference>
<dbReference type="MalaCards" id="C10orf105"/>
<dbReference type="neXtProt" id="NX_Q8TEF2"/>
<dbReference type="OpenTargets" id="ENSG00000214688"/>
<dbReference type="PharmGKB" id="PA134923659"/>
<dbReference type="VEuPathDB" id="HostDB:ENSG00000214688"/>
<dbReference type="eggNOG" id="ENOG502S4ZY">
    <property type="taxonomic scope" value="Eukaryota"/>
</dbReference>
<dbReference type="GeneTree" id="ENSGT00490000043902"/>
<dbReference type="HOGENOM" id="CLU_1849757_0_0_1"/>
<dbReference type="InParanoid" id="Q8TEF2"/>
<dbReference type="OMA" id="HECMPYH"/>
<dbReference type="OrthoDB" id="8955919at2759"/>
<dbReference type="PAN-GO" id="Q8TEF2">
    <property type="GO annotations" value="0 GO annotations based on evolutionary models"/>
</dbReference>
<dbReference type="PhylomeDB" id="Q8TEF2"/>
<dbReference type="PathwayCommons" id="Q8TEF2"/>
<dbReference type="SignaLink" id="Q8TEF2"/>
<dbReference type="BioGRID-ORCS" id="414152">
    <property type="hits" value="16 hits in 1121 CRISPR screens"/>
</dbReference>
<dbReference type="Pharos" id="Q8TEF2">
    <property type="development level" value="Tdark"/>
</dbReference>
<dbReference type="PRO" id="PR:Q8TEF2"/>
<dbReference type="Proteomes" id="UP000005640">
    <property type="component" value="Chromosome 10"/>
</dbReference>
<dbReference type="RNAct" id="Q8TEF2">
    <property type="molecule type" value="protein"/>
</dbReference>
<dbReference type="Bgee" id="ENSG00000214688">
    <property type="expression patterns" value="Expressed in blood and 82 other cell types or tissues"/>
</dbReference>
<dbReference type="GO" id="GO:0016020">
    <property type="term" value="C:membrane"/>
    <property type="evidence" value="ECO:0007669"/>
    <property type="project" value="UniProtKB-SubCell"/>
</dbReference>
<dbReference type="InterPro" id="IPR039954">
    <property type="entry name" value="DUF5527"/>
</dbReference>
<dbReference type="PANTHER" id="PTHR38325:SF1">
    <property type="entry name" value="GENE, 17455-RELATED"/>
    <property type="match status" value="1"/>
</dbReference>
<dbReference type="PANTHER" id="PTHR38325">
    <property type="entry name" value="MCG55969"/>
    <property type="match status" value="1"/>
</dbReference>
<dbReference type="Pfam" id="PF17665">
    <property type="entry name" value="DUF5527"/>
    <property type="match status" value="1"/>
</dbReference>
<sequence>MSTEGPSLASSPAISPLAFLSAPVTPGTLAEATDPLPMLIALACIFLLLATCLLFMTLCKPAALDPSRRRAHECMPHHPGSPSEPQLRLWKRLGSLRLSLHSFRHGRPTVPRQPLPGPEDNRSHCDYMESTKM</sequence>